<organism>
    <name type="scientific">Salmonella gallinarum (strain 287/91 / NCTC 13346)</name>
    <dbReference type="NCBI Taxonomy" id="550538"/>
    <lineage>
        <taxon>Bacteria</taxon>
        <taxon>Pseudomonadati</taxon>
        <taxon>Pseudomonadota</taxon>
        <taxon>Gammaproteobacteria</taxon>
        <taxon>Enterobacterales</taxon>
        <taxon>Enterobacteriaceae</taxon>
        <taxon>Salmonella</taxon>
    </lineage>
</organism>
<accession>B5RGA8</accession>
<protein>
    <recommendedName>
        <fullName evidence="1">Protein FixA</fullName>
    </recommendedName>
</protein>
<reference key="1">
    <citation type="journal article" date="2008" name="Genome Res.">
        <title>Comparative genome analysis of Salmonella enteritidis PT4 and Salmonella gallinarum 287/91 provides insights into evolutionary and host adaptation pathways.</title>
        <authorList>
            <person name="Thomson N.R."/>
            <person name="Clayton D.J."/>
            <person name="Windhorst D."/>
            <person name="Vernikos G."/>
            <person name="Davidson S."/>
            <person name="Churcher C."/>
            <person name="Quail M.A."/>
            <person name="Stevens M."/>
            <person name="Jones M.A."/>
            <person name="Watson M."/>
            <person name="Barron A."/>
            <person name="Layton A."/>
            <person name="Pickard D."/>
            <person name="Kingsley R.A."/>
            <person name="Bignell A."/>
            <person name="Clark L."/>
            <person name="Harris B."/>
            <person name="Ormond D."/>
            <person name="Abdellah Z."/>
            <person name="Brooks K."/>
            <person name="Cherevach I."/>
            <person name="Chillingworth T."/>
            <person name="Woodward J."/>
            <person name="Norberczak H."/>
            <person name="Lord A."/>
            <person name="Arrowsmith C."/>
            <person name="Jagels K."/>
            <person name="Moule S."/>
            <person name="Mungall K."/>
            <person name="Saunders M."/>
            <person name="Whitehead S."/>
            <person name="Chabalgoity J.A."/>
            <person name="Maskell D."/>
            <person name="Humphreys T."/>
            <person name="Roberts M."/>
            <person name="Barrow P.A."/>
            <person name="Dougan G."/>
            <person name="Parkhill J."/>
        </authorList>
    </citation>
    <scope>NUCLEOTIDE SEQUENCE [LARGE SCALE GENOMIC DNA]</scope>
    <source>
        <strain>287/91 / NCTC 13346</strain>
    </source>
</reference>
<sequence>MKIITCYKCVPDEQDIAINNADGTLDFSKADSKISQYDLNAIEAACQLKQQLGDAQVVAMSVGGKALTNAKGRKDVLSRGPDELIVVIDDQFEQALPQHTATALAAAAQKSGFDLLICGDGSSDLYAQQVGLLVGEALNIPAINGVSKILSLTDSTLTVERELEDEVETLSIPLPAVIAVSTDINTPQIPSMKAILGAAKKPVQVWSPADIGLNSVSAYSTQQVAAPKQRERQRVVIEGDGEEQIAAFVENLRKII</sequence>
<proteinExistence type="inferred from homology"/>
<gene>
    <name evidence="1" type="primary">fixA</name>
    <name type="ordered locus">SG0078</name>
</gene>
<evidence type="ECO:0000255" key="1">
    <source>
        <dbReference type="HAMAP-Rule" id="MF_01055"/>
    </source>
</evidence>
<comment type="function">
    <text evidence="1">Required for anaerobic carnitine reduction. May bring reductant to CaiA.</text>
</comment>
<comment type="pathway">
    <text evidence="1">Amine and polyamine metabolism; carnitine metabolism.</text>
</comment>
<comment type="subunit">
    <text evidence="1">Heterodimer of FixA and FixB.</text>
</comment>
<comment type="similarity">
    <text evidence="1">Belongs to the ETF beta-subunit/FixA family.</text>
</comment>
<keyword id="KW-0249">Electron transport</keyword>
<keyword id="KW-0813">Transport</keyword>
<feature type="chain" id="PRO_1000136324" description="Protein FixA">
    <location>
        <begin position="1"/>
        <end position="256"/>
    </location>
</feature>
<dbReference type="EMBL" id="AM933173">
    <property type="protein sequence ID" value="CAR35985.1"/>
    <property type="molecule type" value="Genomic_DNA"/>
</dbReference>
<dbReference type="RefSeq" id="WP_000692191.1">
    <property type="nucleotide sequence ID" value="NC_011274.1"/>
</dbReference>
<dbReference type="SMR" id="B5RGA8"/>
<dbReference type="KEGG" id="seg:SG0078"/>
<dbReference type="HOGENOM" id="CLU_060196_2_2_6"/>
<dbReference type="UniPathway" id="UPA00117"/>
<dbReference type="Proteomes" id="UP000008321">
    <property type="component" value="Chromosome"/>
</dbReference>
<dbReference type="GO" id="GO:0009055">
    <property type="term" value="F:electron transfer activity"/>
    <property type="evidence" value="ECO:0007669"/>
    <property type="project" value="InterPro"/>
</dbReference>
<dbReference type="GO" id="GO:0009437">
    <property type="term" value="P:carnitine metabolic process"/>
    <property type="evidence" value="ECO:0007669"/>
    <property type="project" value="UniProtKB-UniRule"/>
</dbReference>
<dbReference type="CDD" id="cd01714">
    <property type="entry name" value="ETF_beta"/>
    <property type="match status" value="1"/>
</dbReference>
<dbReference type="FunFam" id="3.40.50.620:FF:000072">
    <property type="entry name" value="Protein FixA homolog"/>
    <property type="match status" value="1"/>
</dbReference>
<dbReference type="Gene3D" id="3.40.50.620">
    <property type="entry name" value="HUPs"/>
    <property type="match status" value="1"/>
</dbReference>
<dbReference type="HAMAP" id="MF_01055">
    <property type="entry name" value="FixA"/>
    <property type="match status" value="1"/>
</dbReference>
<dbReference type="InterPro" id="IPR000049">
    <property type="entry name" value="ET-Flavoprotein_bsu_CS"/>
</dbReference>
<dbReference type="InterPro" id="IPR014730">
    <property type="entry name" value="ETF_a/b_N"/>
</dbReference>
<dbReference type="InterPro" id="IPR012255">
    <property type="entry name" value="ETF_b"/>
</dbReference>
<dbReference type="InterPro" id="IPR033948">
    <property type="entry name" value="ETF_beta_N"/>
</dbReference>
<dbReference type="InterPro" id="IPR023463">
    <property type="entry name" value="FixA"/>
</dbReference>
<dbReference type="InterPro" id="IPR014729">
    <property type="entry name" value="Rossmann-like_a/b/a_fold"/>
</dbReference>
<dbReference type="NCBIfam" id="NF002888">
    <property type="entry name" value="PRK03359.1"/>
    <property type="match status" value="1"/>
</dbReference>
<dbReference type="PANTHER" id="PTHR21294">
    <property type="entry name" value="ELECTRON TRANSFER FLAVOPROTEIN BETA-SUBUNIT"/>
    <property type="match status" value="1"/>
</dbReference>
<dbReference type="PANTHER" id="PTHR21294:SF17">
    <property type="entry name" value="PROTEIN FIXA"/>
    <property type="match status" value="1"/>
</dbReference>
<dbReference type="Pfam" id="PF01012">
    <property type="entry name" value="ETF"/>
    <property type="match status" value="1"/>
</dbReference>
<dbReference type="PIRSF" id="PIRSF000090">
    <property type="entry name" value="Beta-ETF"/>
    <property type="match status" value="1"/>
</dbReference>
<dbReference type="SMART" id="SM00893">
    <property type="entry name" value="ETF"/>
    <property type="match status" value="1"/>
</dbReference>
<dbReference type="SUPFAM" id="SSF52402">
    <property type="entry name" value="Adenine nucleotide alpha hydrolases-like"/>
    <property type="match status" value="1"/>
</dbReference>
<dbReference type="PROSITE" id="PS01065">
    <property type="entry name" value="ETF_BETA"/>
    <property type="match status" value="1"/>
</dbReference>
<name>FIXA_SALG2</name>